<proteinExistence type="inferred from homology"/>
<evidence type="ECO:0000250" key="1">
    <source>
        <dbReference type="UniProtKB" id="B8YB55"/>
    </source>
</evidence>
<evidence type="ECO:0000250" key="2">
    <source>
        <dbReference type="UniProtKB" id="P11513"/>
    </source>
</evidence>
<evidence type="ECO:0000303" key="3">
    <source>
    </source>
</evidence>
<evidence type="ECO:0000305" key="4"/>
<comment type="function">
    <text evidence="1">DNA-dependent RNA polymerase (RNAP) catalyzes the transcription of DNA into RNA using the four ribonucleoside triphosphates as substrates. This subunit is involved in DNA promoter recognition.</text>
</comment>
<comment type="catalytic activity">
    <reaction evidence="2">
        <text>RNA(n) + a ribonucleoside 5'-triphosphate = RNA(n+1) + diphosphate</text>
        <dbReference type="Rhea" id="RHEA:21248"/>
        <dbReference type="Rhea" id="RHEA-COMP:14527"/>
        <dbReference type="Rhea" id="RHEA-COMP:17342"/>
        <dbReference type="ChEBI" id="CHEBI:33019"/>
        <dbReference type="ChEBI" id="CHEBI:61557"/>
        <dbReference type="ChEBI" id="CHEBI:140395"/>
        <dbReference type="EC" id="2.7.7.6"/>
    </reaction>
</comment>
<comment type="cofactor">
    <cofactor evidence="1">
        <name>Zn(2+)</name>
        <dbReference type="ChEBI" id="CHEBI:29105"/>
    </cofactor>
    <text evidence="1">Binds 1 Zn(2+) per subunit.</text>
</comment>
<comment type="subunit">
    <text evidence="4">Part of the RNA polymerase complex.</text>
</comment>
<comment type="subcellular location">
    <subcellularLocation>
        <location evidence="1">Cytoplasm</location>
    </subcellularLocation>
</comment>
<comment type="similarity">
    <text evidence="4">Belongs to the RNA polymerase beta chain family.</text>
</comment>
<protein>
    <recommendedName>
        <fullName evidence="4">DNA-directed RNA polymerase subunit Rpo2</fullName>
        <ecNumber evidence="2">2.7.7.6</ecNumber>
    </recommendedName>
    <alternativeName>
        <fullName evidence="3">DNA-directed RNA polymerase subunit B</fullName>
    </alternativeName>
</protein>
<feature type="chain" id="PRO_0000048099" description="DNA-directed RNA polymerase subunit Rpo2">
    <location>
        <begin position="1"/>
        <end position="1122"/>
    </location>
</feature>
<feature type="binding site" evidence="1">
    <location>
        <position position="1064"/>
    </location>
    <ligand>
        <name>Zn(2+)</name>
        <dbReference type="ChEBI" id="CHEBI:29105"/>
    </ligand>
</feature>
<feature type="binding site" evidence="1">
    <location>
        <position position="1067"/>
    </location>
    <ligand>
        <name>Zn(2+)</name>
        <dbReference type="ChEBI" id="CHEBI:29105"/>
    </ligand>
</feature>
<feature type="binding site" evidence="1">
    <location>
        <position position="1082"/>
    </location>
    <ligand>
        <name>Zn(2+)</name>
        <dbReference type="ChEBI" id="CHEBI:29105"/>
    </ligand>
</feature>
<feature type="binding site" evidence="4">
    <location>
        <position position="1085"/>
    </location>
    <ligand>
        <name>Zn(2+)</name>
        <dbReference type="ChEBI" id="CHEBI:29105"/>
    </ligand>
</feature>
<gene>
    <name evidence="4" type="primary">rpo2</name>
    <name evidence="3" type="synonym">rpoB</name>
</gene>
<reference key="1">
    <citation type="journal article" date="1992" name="Nucleic Acids Res.">
        <title>Nucleotide sequence of the genes encoding the three largest subunits of the DNA-dependent RNA polymerase from the archaeum Thermococcus celer.</title>
        <authorList>
            <person name="Klenk H.-P."/>
            <person name="Schwass V."/>
            <person name="Lottspeich F."/>
            <person name="Zillig W."/>
        </authorList>
    </citation>
    <scope>NUCLEOTIDE SEQUENCE [GENOMIC DNA]</scope>
    <source>
        <strain>ATCC 35543 / DSM 2476 / JCM 8558 / Vu 13</strain>
    </source>
</reference>
<accession>P31814</accession>
<name>RPO2_THECE</name>
<organism>
    <name type="scientific">Thermococcus celer</name>
    <dbReference type="NCBI Taxonomy" id="2264"/>
    <lineage>
        <taxon>Archaea</taxon>
        <taxon>Methanobacteriati</taxon>
        <taxon>Methanobacteriota</taxon>
        <taxon>Thermococci</taxon>
        <taxon>Thermococcales</taxon>
        <taxon>Thermococcaceae</taxon>
        <taxon>Thermococcus</taxon>
    </lineage>
</organism>
<sequence>MASRGPTVVDVTPDDLWLVMEAYWKEKGLVRQHLDSYNAFIDHGMQEVIDEFGGVKPDIPDFEVKFGKVRLGEPEFQEAQGQRKPLYPMDARIRNLTYSAPIYLELIPVVNGVSQEAVEVRIGELPIMLKSKACRLYGLSDEELIKLGEDPKDPGGYFIVNGSERVIVSIEDLAPNKTLVERDERQNRIIAKCFSYRHGYRALITVERRKDGILYVKLPNVPRPVKFVYVMRALGLLSDREIVEAVSDDPRIQHVLFDNLEDASDVTTQEEALDYIGKLSLPGQPKEYRLRRAQNIIDNNLLPHMGVEEKDRKAKAYYLGMMALRVLELSLGLRGEDDKDHYANKRLKLAGDLLMDLFRVAFGQLVKDMQYQMTKTYQRKGERYTFENIQRFVRNSIRPDVLSERIEHALATGSWPGGRTGVSQLLDRTNYISTLSHLRRVTSPLSREQPHFEARDLHGTHWGRICPTETPEGPNCGLVKNLALMSQITTGVPEEEVREYLERLGVVPIEERRPNPDLWRLYLNGVLVGTVEDGEGFVNRIRTDRRSGKISDIINVALYQDEDVKEIYVNSDDGRVRRPLIIVENGRPKLTREHVEAIKNGSLTWSDLVKMGVIEYLDAEEEENALVATWPWEVTEEHTHLELMPAAILGIPASLVPYPEHNARPRNTYGAGMAKQSLGLGWANFRIRVDTRGHLMHYPQVPLVNSRIMKAVGFEERPAGQNFVVAVLSYAGYNMEDAIIMNKASIERGLARSTFFRTYEAEEKRYLGGQTDRFEIPDPTIQGYLGERYYRHLDEDGIIFPESKVNGKDVLVGRTSPPRFLEEQSGLGGIILQERRETSLTVRPSETGVVDKVIITETGDGTKLVKVTTRDLRIPEFGDKFASRHGQKGVIGLIVPQEDMPWTESGIVPDLIVNPHGIPSRMTVGQLIEAIGGKVASLKGRRVDGTAFIGEPEEKLRKELEELGFKHSGREVMYDGITGRRLEADVFVGVIYYQRLHHMVADKMHARSRGPVQVLTKQPTEGRAREGGLRFGEMERDVLIGHGAAMLLIERLLEESDKTEVWVCENCGHIALEDKRRGKVYCPVCGEEERISKVEMSYAFKLLLDELKAMGIRPSLKLVDRV</sequence>
<keyword id="KW-0963">Cytoplasm</keyword>
<keyword id="KW-0238">DNA-binding</keyword>
<keyword id="KW-0240">DNA-directed RNA polymerase</keyword>
<keyword id="KW-0479">Metal-binding</keyword>
<keyword id="KW-0548">Nucleotidyltransferase</keyword>
<keyword id="KW-0804">Transcription</keyword>
<keyword id="KW-0808">Transferase</keyword>
<keyword id="KW-0862">Zinc</keyword>
<dbReference type="EC" id="2.7.7.6" evidence="2"/>
<dbReference type="EMBL" id="X67313">
    <property type="protein sequence ID" value="CAA47722.1"/>
    <property type="molecule type" value="Genomic_DNA"/>
</dbReference>
<dbReference type="PIR" id="S25563">
    <property type="entry name" value="S25563"/>
</dbReference>
<dbReference type="SMR" id="P31814"/>
<dbReference type="GO" id="GO:0005737">
    <property type="term" value="C:cytoplasm"/>
    <property type="evidence" value="ECO:0007669"/>
    <property type="project" value="UniProtKB-SubCell"/>
</dbReference>
<dbReference type="GO" id="GO:0000428">
    <property type="term" value="C:DNA-directed RNA polymerase complex"/>
    <property type="evidence" value="ECO:0007669"/>
    <property type="project" value="UniProtKB-KW"/>
</dbReference>
<dbReference type="GO" id="GO:0003677">
    <property type="term" value="F:DNA binding"/>
    <property type="evidence" value="ECO:0007669"/>
    <property type="project" value="UniProtKB-KW"/>
</dbReference>
<dbReference type="GO" id="GO:0003899">
    <property type="term" value="F:DNA-directed RNA polymerase activity"/>
    <property type="evidence" value="ECO:0007669"/>
    <property type="project" value="UniProtKB-EC"/>
</dbReference>
<dbReference type="GO" id="GO:0032549">
    <property type="term" value="F:ribonucleoside binding"/>
    <property type="evidence" value="ECO:0007669"/>
    <property type="project" value="InterPro"/>
</dbReference>
<dbReference type="GO" id="GO:0008270">
    <property type="term" value="F:zinc ion binding"/>
    <property type="evidence" value="ECO:0007669"/>
    <property type="project" value="InterPro"/>
</dbReference>
<dbReference type="GO" id="GO:0006351">
    <property type="term" value="P:DNA-templated transcription"/>
    <property type="evidence" value="ECO:0007669"/>
    <property type="project" value="InterPro"/>
</dbReference>
<dbReference type="CDD" id="cd00653">
    <property type="entry name" value="RNA_pol_B_RPB2"/>
    <property type="match status" value="1"/>
</dbReference>
<dbReference type="FunFam" id="2.40.270.10:FF:000011">
    <property type="entry name" value="DNA-directed RNA polymerase subunit beta"/>
    <property type="match status" value="1"/>
</dbReference>
<dbReference type="Gene3D" id="2.40.50.150">
    <property type="match status" value="1"/>
</dbReference>
<dbReference type="Gene3D" id="3.90.1100.10">
    <property type="match status" value="1"/>
</dbReference>
<dbReference type="Gene3D" id="2.40.270.10">
    <property type="entry name" value="DNA-directed RNA polymerase, subunit 2, domain 6"/>
    <property type="match status" value="1"/>
</dbReference>
<dbReference type="Gene3D" id="3.90.1800.10">
    <property type="entry name" value="RNA polymerase alpha subunit dimerisation domain"/>
    <property type="match status" value="1"/>
</dbReference>
<dbReference type="Gene3D" id="3.90.1110.10">
    <property type="entry name" value="RNA polymerase Rpb2, domain 2"/>
    <property type="match status" value="1"/>
</dbReference>
<dbReference type="InterPro" id="IPR015712">
    <property type="entry name" value="DNA-dir_RNA_pol_su2"/>
</dbReference>
<dbReference type="InterPro" id="IPR007120">
    <property type="entry name" value="DNA-dir_RNAP_su2_dom"/>
</dbReference>
<dbReference type="InterPro" id="IPR037033">
    <property type="entry name" value="DNA-dir_RNAP_su2_hyb_sf"/>
</dbReference>
<dbReference type="InterPro" id="IPR007121">
    <property type="entry name" value="RNA_pol_bsu_CS"/>
</dbReference>
<dbReference type="InterPro" id="IPR007644">
    <property type="entry name" value="RNA_pol_bsu_protrusion"/>
</dbReference>
<dbReference type="InterPro" id="IPR007642">
    <property type="entry name" value="RNA_pol_Rpb2_2"/>
</dbReference>
<dbReference type="InterPro" id="IPR037034">
    <property type="entry name" value="RNA_pol_Rpb2_2_sf"/>
</dbReference>
<dbReference type="InterPro" id="IPR007645">
    <property type="entry name" value="RNA_pol_Rpb2_3"/>
</dbReference>
<dbReference type="InterPro" id="IPR007646">
    <property type="entry name" value="RNA_pol_Rpb2_4"/>
</dbReference>
<dbReference type="InterPro" id="IPR007647">
    <property type="entry name" value="RNA_pol_Rpb2_5"/>
</dbReference>
<dbReference type="InterPro" id="IPR007641">
    <property type="entry name" value="RNA_pol_Rpb2_7"/>
</dbReference>
<dbReference type="InterPro" id="IPR014724">
    <property type="entry name" value="RNA_pol_RPB2_OB-fold"/>
</dbReference>
<dbReference type="InterPro" id="IPR019969">
    <property type="entry name" value="RNAP_Rpo2"/>
</dbReference>
<dbReference type="NCBIfam" id="NF006335">
    <property type="entry name" value="PRK08565.1"/>
    <property type="match status" value="1"/>
</dbReference>
<dbReference type="NCBIfam" id="NF007175">
    <property type="entry name" value="PRK09606.1"/>
    <property type="match status" value="1"/>
</dbReference>
<dbReference type="NCBIfam" id="TIGR03670">
    <property type="entry name" value="rpoB_arch"/>
    <property type="match status" value="1"/>
</dbReference>
<dbReference type="PANTHER" id="PTHR20856">
    <property type="entry name" value="DNA-DIRECTED RNA POLYMERASE I SUBUNIT 2"/>
    <property type="match status" value="1"/>
</dbReference>
<dbReference type="Pfam" id="PF04563">
    <property type="entry name" value="RNA_pol_Rpb2_1"/>
    <property type="match status" value="1"/>
</dbReference>
<dbReference type="Pfam" id="PF04561">
    <property type="entry name" value="RNA_pol_Rpb2_2"/>
    <property type="match status" value="1"/>
</dbReference>
<dbReference type="Pfam" id="PF04565">
    <property type="entry name" value="RNA_pol_Rpb2_3"/>
    <property type="match status" value="1"/>
</dbReference>
<dbReference type="Pfam" id="PF04566">
    <property type="entry name" value="RNA_pol_Rpb2_4"/>
    <property type="match status" value="1"/>
</dbReference>
<dbReference type="Pfam" id="PF04567">
    <property type="entry name" value="RNA_pol_Rpb2_5"/>
    <property type="match status" value="1"/>
</dbReference>
<dbReference type="Pfam" id="PF00562">
    <property type="entry name" value="RNA_pol_Rpb2_6"/>
    <property type="match status" value="1"/>
</dbReference>
<dbReference type="Pfam" id="PF04560">
    <property type="entry name" value="RNA_pol_Rpb2_7"/>
    <property type="match status" value="1"/>
</dbReference>
<dbReference type="SUPFAM" id="SSF64484">
    <property type="entry name" value="beta and beta-prime subunits of DNA dependent RNA-polymerase"/>
    <property type="match status" value="1"/>
</dbReference>
<dbReference type="PROSITE" id="PS01166">
    <property type="entry name" value="RNA_POL_BETA"/>
    <property type="match status" value="1"/>
</dbReference>